<evidence type="ECO:0000250" key="1"/>
<evidence type="ECO:0000305" key="2"/>
<reference key="1">
    <citation type="journal article" date="1993" name="Gen. Comp. Endocrinol.">
        <title>Cloning and analysis of the gene encoding hummingbird proinsulin.</title>
        <authorList>
            <person name="Fan L."/>
            <person name="Gardner P."/>
            <person name="Chan S.J."/>
            <person name="Steiner D.F."/>
        </authorList>
    </citation>
    <scope>NUCLEOTIDE SEQUENCE [GENOMIC DNA]</scope>
</reference>
<dbReference type="EMBL" id="AH006925">
    <property type="protein sequence ID" value="AAC64211.1"/>
    <property type="molecule type" value="Genomic_DNA"/>
</dbReference>
<dbReference type="PIR" id="I51221">
    <property type="entry name" value="I51221"/>
</dbReference>
<dbReference type="SMR" id="P51463"/>
<dbReference type="GO" id="GO:0005615">
    <property type="term" value="C:extracellular space"/>
    <property type="evidence" value="ECO:0007669"/>
    <property type="project" value="TreeGrafter"/>
</dbReference>
<dbReference type="GO" id="GO:0005179">
    <property type="term" value="F:hormone activity"/>
    <property type="evidence" value="ECO:0007669"/>
    <property type="project" value="UniProtKB-KW"/>
</dbReference>
<dbReference type="GO" id="GO:0006006">
    <property type="term" value="P:glucose metabolic process"/>
    <property type="evidence" value="ECO:0007669"/>
    <property type="project" value="UniProtKB-KW"/>
</dbReference>
<dbReference type="CDD" id="cd04367">
    <property type="entry name" value="IlGF_insulin_like"/>
    <property type="match status" value="1"/>
</dbReference>
<dbReference type="FunFam" id="1.10.100.10:FF:000003">
    <property type="entry name" value="Insulin"/>
    <property type="match status" value="1"/>
</dbReference>
<dbReference type="Gene3D" id="1.10.100.10">
    <property type="entry name" value="Insulin-like"/>
    <property type="match status" value="1"/>
</dbReference>
<dbReference type="InterPro" id="IPR004825">
    <property type="entry name" value="Insulin"/>
</dbReference>
<dbReference type="InterPro" id="IPR016179">
    <property type="entry name" value="Insulin-like"/>
</dbReference>
<dbReference type="InterPro" id="IPR036438">
    <property type="entry name" value="Insulin-like_sf"/>
</dbReference>
<dbReference type="InterPro" id="IPR022353">
    <property type="entry name" value="Insulin_CS"/>
</dbReference>
<dbReference type="InterPro" id="IPR022352">
    <property type="entry name" value="Insulin_family"/>
</dbReference>
<dbReference type="PANTHER" id="PTHR11454:SF9">
    <property type="entry name" value="INSULIN"/>
    <property type="match status" value="1"/>
</dbReference>
<dbReference type="PANTHER" id="PTHR11454">
    <property type="entry name" value="INSULIN/INSULIN GROWTH FACTOR"/>
    <property type="match status" value="1"/>
</dbReference>
<dbReference type="Pfam" id="PF00049">
    <property type="entry name" value="Insulin"/>
    <property type="match status" value="1"/>
</dbReference>
<dbReference type="PRINTS" id="PR00277">
    <property type="entry name" value="INSULIN"/>
</dbReference>
<dbReference type="PRINTS" id="PR00276">
    <property type="entry name" value="INSULINFAMLY"/>
</dbReference>
<dbReference type="SMART" id="SM00078">
    <property type="entry name" value="IlGF"/>
    <property type="match status" value="1"/>
</dbReference>
<dbReference type="SUPFAM" id="SSF56994">
    <property type="entry name" value="Insulin-like"/>
    <property type="match status" value="1"/>
</dbReference>
<dbReference type="PROSITE" id="PS00262">
    <property type="entry name" value="INSULIN"/>
    <property type="match status" value="1"/>
</dbReference>
<organism>
    <name type="scientific">Selasphorus rufus</name>
    <name type="common">Rufous hummingbird</name>
    <name type="synonym">Trochilus rufus</name>
    <dbReference type="NCBI Taxonomy" id="29060"/>
    <lineage>
        <taxon>Eukaryota</taxon>
        <taxon>Metazoa</taxon>
        <taxon>Chordata</taxon>
        <taxon>Craniata</taxon>
        <taxon>Vertebrata</taxon>
        <taxon>Euteleostomi</taxon>
        <taxon>Archelosauria</taxon>
        <taxon>Archosauria</taxon>
        <taxon>Dinosauria</taxon>
        <taxon>Saurischia</taxon>
        <taxon>Theropoda</taxon>
        <taxon>Coelurosauria</taxon>
        <taxon>Aves</taxon>
        <taxon>Neognathae</taxon>
        <taxon>Neoaves</taxon>
        <taxon>Strisores</taxon>
        <taxon>Apodiformes</taxon>
        <taxon>Trochilidae</taxon>
        <taxon>Selasphorus</taxon>
    </lineage>
</organism>
<name>INS_SELRF</name>
<accession>P51463</accession>
<proteinExistence type="inferred from homology"/>
<gene>
    <name type="primary">INS</name>
</gene>
<comment type="function">
    <text>Insulin decreases blood glucose concentration. It increases cell permeability to monosaccharides, amino acids and fatty acids. It accelerates glycolysis, the pentose phosphate cycle, and glycogen synthesis in liver.</text>
</comment>
<comment type="subunit">
    <text>Heterodimer of a B chain and an A chain linked by two disulfide bonds.</text>
</comment>
<comment type="subcellular location">
    <subcellularLocation>
        <location>Secreted</location>
    </subcellularLocation>
</comment>
<comment type="similarity">
    <text evidence="2">Belongs to the insulin family.</text>
</comment>
<feature type="signal peptide" evidence="1">
    <location>
        <begin position="1" status="less than"/>
        <end position="20"/>
    </location>
</feature>
<feature type="peptide" id="PRO_0000015906" description="Insulin B chain">
    <location>
        <begin position="21"/>
        <end position="50"/>
    </location>
</feature>
<feature type="propeptide" id="PRO_0000015907" description="C peptide">
    <location>
        <begin position="53"/>
        <end position="80"/>
    </location>
</feature>
<feature type="peptide" id="PRO_0000015908" description="Insulin A chain">
    <location>
        <begin position="83"/>
        <end position="103"/>
    </location>
</feature>
<feature type="disulfide bond" description="Interchain (between B and A chains)" evidence="1">
    <location>
        <begin position="27"/>
        <end position="89"/>
    </location>
</feature>
<feature type="disulfide bond" description="Interchain (between B and A chains)" evidence="1">
    <location>
        <begin position="39"/>
        <end position="102"/>
    </location>
</feature>
<feature type="disulfide bond" evidence="1">
    <location>
        <begin position="88"/>
        <end position="93"/>
    </location>
</feature>
<feature type="non-terminal residue">
    <location>
        <position position="1"/>
    </location>
</feature>
<protein>
    <recommendedName>
        <fullName>Insulin</fullName>
    </recommendedName>
    <component>
        <recommendedName>
            <fullName>Insulin B chain</fullName>
        </recommendedName>
    </component>
    <component>
        <recommendedName>
            <fullName>Insulin A chain</fullName>
        </recommendedName>
    </component>
</protein>
<keyword id="KW-0119">Carbohydrate metabolism</keyword>
<keyword id="KW-0165">Cleavage on pair of basic residues</keyword>
<keyword id="KW-1015">Disulfide bond</keyword>
<keyword id="KW-0313">Glucose metabolism</keyword>
<keyword id="KW-0372">Hormone</keyword>
<keyword id="KW-0964">Secreted</keyword>
<keyword id="KW-0732">Signal</keyword>
<sequence length="103" mass="11378">IQSLPLLALLALSGPGTSHAAVNQHLCGSHLVEALYLVCGERGFFYSPKARRDAEHPLVNGPLHGEVGDLPFQQEEFEKVKRGIVEQCCHNTCSLYQLENYCN</sequence>